<name>RL372_DROME</name>
<protein>
    <recommendedName>
        <fullName evidence="3">Large ribosomal subunit protein L37-2</fullName>
    </recommendedName>
    <alternativeName>
        <fullName evidence="3">Large ribosomal subunit protein eL37B</fullName>
    </alternativeName>
    <alternativeName>
        <fullName evidence="3">Probable 60S ribosomal protein L37-B</fullName>
    </alternativeName>
</protein>
<dbReference type="EMBL" id="AE013599">
    <property type="protein sequence ID" value="AAF46957.1"/>
    <property type="molecule type" value="Genomic_DNA"/>
</dbReference>
<dbReference type="EMBL" id="BT023213">
    <property type="protein sequence ID" value="AAY55629.1"/>
    <property type="molecule type" value="mRNA"/>
</dbReference>
<dbReference type="EMBL" id="BT044298">
    <property type="protein sequence ID" value="ACH92363.1"/>
    <property type="molecule type" value="mRNA"/>
</dbReference>
<dbReference type="RefSeq" id="NP_611757.1">
    <property type="nucleotide sequence ID" value="NM_137913.3"/>
</dbReference>
<dbReference type="PDB" id="6XU6">
    <property type="method" value="EM"/>
    <property type="resolution" value="3.50 A"/>
    <property type="chains" value="Cj=2-88"/>
</dbReference>
<dbReference type="PDB" id="6XU7">
    <property type="method" value="EM"/>
    <property type="resolution" value="4.90 A"/>
    <property type="chains" value="Cj=2-88"/>
</dbReference>
<dbReference type="PDBsum" id="6XU6"/>
<dbReference type="PDBsum" id="6XU7"/>
<dbReference type="EMDB" id="EMD-10622"/>
<dbReference type="EMDB" id="EMD-10623"/>
<dbReference type="SMR" id="Q9W1U6"/>
<dbReference type="FunCoup" id="Q9W1U6">
    <property type="interactions" value="151"/>
</dbReference>
<dbReference type="STRING" id="7227.FBpp0071888"/>
<dbReference type="PaxDb" id="7227-FBpp0071888"/>
<dbReference type="DNASU" id="37669"/>
<dbReference type="EnsemblMetazoa" id="FBtr0071978">
    <property type="protein sequence ID" value="FBpp0071888"/>
    <property type="gene ID" value="FBgn0034822"/>
</dbReference>
<dbReference type="GeneID" id="37669"/>
<dbReference type="KEGG" id="dme:Dmel_CG9873"/>
<dbReference type="AGR" id="FB:FBgn0034822"/>
<dbReference type="CTD" id="37669"/>
<dbReference type="FlyBase" id="FBgn0034822">
    <property type="gene designation" value="RpL37-2"/>
</dbReference>
<dbReference type="VEuPathDB" id="VectorBase:FBgn0034822"/>
<dbReference type="eggNOG" id="KOG3475">
    <property type="taxonomic scope" value="Eukaryota"/>
</dbReference>
<dbReference type="GeneTree" id="ENSGT00940000168926"/>
<dbReference type="HOGENOM" id="CLU_150908_2_1_1"/>
<dbReference type="InParanoid" id="Q9W1U6"/>
<dbReference type="OMA" id="CQNKTHT"/>
<dbReference type="OrthoDB" id="10259236at2759"/>
<dbReference type="PhylomeDB" id="Q9W1U6"/>
<dbReference type="BioGRID-ORCS" id="37669">
    <property type="hits" value="0 hits in 1 CRISPR screen"/>
</dbReference>
<dbReference type="GenomeRNAi" id="37669"/>
<dbReference type="PRO" id="PR:Q9W1U6"/>
<dbReference type="Proteomes" id="UP000000803">
    <property type="component" value="Chromosome 2R"/>
</dbReference>
<dbReference type="Bgee" id="FBgn0034822">
    <property type="expression patterns" value="Expressed in spermatocyte in testis and 22 other cell types or tissues"/>
</dbReference>
<dbReference type="GO" id="GO:0022625">
    <property type="term" value="C:cytosolic large ribosomal subunit"/>
    <property type="evidence" value="ECO:0000318"/>
    <property type="project" value="GO_Central"/>
</dbReference>
<dbReference type="GO" id="GO:0003723">
    <property type="term" value="F:RNA binding"/>
    <property type="evidence" value="ECO:0000318"/>
    <property type="project" value="GO_Central"/>
</dbReference>
<dbReference type="GO" id="GO:0019843">
    <property type="term" value="F:rRNA binding"/>
    <property type="evidence" value="ECO:0007669"/>
    <property type="project" value="UniProtKB-KW"/>
</dbReference>
<dbReference type="GO" id="GO:0003735">
    <property type="term" value="F:structural constituent of ribosome"/>
    <property type="evidence" value="ECO:0000304"/>
    <property type="project" value="FlyBase"/>
</dbReference>
<dbReference type="GO" id="GO:0008270">
    <property type="term" value="F:zinc ion binding"/>
    <property type="evidence" value="ECO:0007669"/>
    <property type="project" value="UniProtKB-KW"/>
</dbReference>
<dbReference type="GO" id="GO:0002181">
    <property type="term" value="P:cytoplasmic translation"/>
    <property type="evidence" value="ECO:0000304"/>
    <property type="project" value="FlyBase"/>
</dbReference>
<dbReference type="GO" id="GO:0006412">
    <property type="term" value="P:translation"/>
    <property type="evidence" value="ECO:0000255"/>
    <property type="project" value="FlyBase"/>
</dbReference>
<dbReference type="FunFam" id="2.20.25.30:FF:000001">
    <property type="entry name" value="Ribosomal protein L37"/>
    <property type="match status" value="1"/>
</dbReference>
<dbReference type="Gene3D" id="2.20.25.30">
    <property type="match status" value="1"/>
</dbReference>
<dbReference type="InterPro" id="IPR001569">
    <property type="entry name" value="Ribosomal_eL37"/>
</dbReference>
<dbReference type="InterPro" id="IPR011331">
    <property type="entry name" value="Ribosomal_eL37/eL43"/>
</dbReference>
<dbReference type="InterPro" id="IPR018267">
    <property type="entry name" value="Ribosomal_eL37_CS"/>
</dbReference>
<dbReference type="InterPro" id="IPR011332">
    <property type="entry name" value="Ribosomal_zn-bd"/>
</dbReference>
<dbReference type="PANTHER" id="PTHR10768">
    <property type="entry name" value="60S RIBOSOMAL PROTEIN L37"/>
    <property type="match status" value="1"/>
</dbReference>
<dbReference type="PANTHER" id="PTHR10768:SF0">
    <property type="entry name" value="RIBOSOMAL PROTEIN L37"/>
    <property type="match status" value="1"/>
</dbReference>
<dbReference type="Pfam" id="PF01907">
    <property type="entry name" value="Ribosomal_L37e"/>
    <property type="match status" value="1"/>
</dbReference>
<dbReference type="SUPFAM" id="SSF57829">
    <property type="entry name" value="Zn-binding ribosomal proteins"/>
    <property type="match status" value="1"/>
</dbReference>
<dbReference type="PROSITE" id="PS01077">
    <property type="entry name" value="RIBOSOMAL_L37E"/>
    <property type="match status" value="1"/>
</dbReference>
<keyword id="KW-0002">3D-structure</keyword>
<keyword id="KW-0479">Metal-binding</keyword>
<keyword id="KW-1185">Reference proteome</keyword>
<keyword id="KW-0687">Ribonucleoprotein</keyword>
<keyword id="KW-0689">Ribosomal protein</keyword>
<keyword id="KW-0694">RNA-binding</keyword>
<keyword id="KW-0699">rRNA-binding</keyword>
<keyword id="KW-0862">Zinc</keyword>
<keyword id="KW-0863">Zinc-finger</keyword>
<feature type="chain" id="PRO_0000139711" description="Large ribosomal subunit protein L37-2">
    <location>
        <begin position="1"/>
        <end position="89"/>
    </location>
</feature>
<feature type="zinc finger region" description="C4-type" evidence="2">
    <location>
        <begin position="19"/>
        <end position="37"/>
    </location>
</feature>
<feature type="binding site" evidence="1">
    <location>
        <position position="19"/>
    </location>
    <ligand>
        <name>Zn(2+)</name>
        <dbReference type="ChEBI" id="CHEBI:29105"/>
    </ligand>
</feature>
<feature type="binding site" evidence="1">
    <location>
        <position position="22"/>
    </location>
    <ligand>
        <name>Zn(2+)</name>
        <dbReference type="ChEBI" id="CHEBI:29105"/>
    </ligand>
</feature>
<feature type="binding site" evidence="1">
    <location>
        <position position="34"/>
    </location>
    <ligand>
        <name>Zn(2+)</name>
        <dbReference type="ChEBI" id="CHEBI:29105"/>
    </ligand>
</feature>
<feature type="binding site" evidence="1">
    <location>
        <position position="37"/>
    </location>
    <ligand>
        <name>Zn(2+)</name>
        <dbReference type="ChEBI" id="CHEBI:29105"/>
    </ligand>
</feature>
<feature type="sequence conflict" description="In Ref. 3; AAY55629." evidence="3" ref="3">
    <original>C</original>
    <variation>S</variation>
    <location>
        <position position="37"/>
    </location>
</feature>
<reference key="1">
    <citation type="journal article" date="2000" name="Science">
        <title>The genome sequence of Drosophila melanogaster.</title>
        <authorList>
            <person name="Adams M.D."/>
            <person name="Celniker S.E."/>
            <person name="Holt R.A."/>
            <person name="Evans C.A."/>
            <person name="Gocayne J.D."/>
            <person name="Amanatides P.G."/>
            <person name="Scherer S.E."/>
            <person name="Li P.W."/>
            <person name="Hoskins R.A."/>
            <person name="Galle R.F."/>
            <person name="George R.A."/>
            <person name="Lewis S.E."/>
            <person name="Richards S."/>
            <person name="Ashburner M."/>
            <person name="Henderson S.N."/>
            <person name="Sutton G.G."/>
            <person name="Wortman J.R."/>
            <person name="Yandell M.D."/>
            <person name="Zhang Q."/>
            <person name="Chen L.X."/>
            <person name="Brandon R.C."/>
            <person name="Rogers Y.-H.C."/>
            <person name="Blazej R.G."/>
            <person name="Champe M."/>
            <person name="Pfeiffer B.D."/>
            <person name="Wan K.H."/>
            <person name="Doyle C."/>
            <person name="Baxter E.G."/>
            <person name="Helt G."/>
            <person name="Nelson C.R."/>
            <person name="Miklos G.L.G."/>
            <person name="Abril J.F."/>
            <person name="Agbayani A."/>
            <person name="An H.-J."/>
            <person name="Andrews-Pfannkoch C."/>
            <person name="Baldwin D."/>
            <person name="Ballew R.M."/>
            <person name="Basu A."/>
            <person name="Baxendale J."/>
            <person name="Bayraktaroglu L."/>
            <person name="Beasley E.M."/>
            <person name="Beeson K.Y."/>
            <person name="Benos P.V."/>
            <person name="Berman B.P."/>
            <person name="Bhandari D."/>
            <person name="Bolshakov S."/>
            <person name="Borkova D."/>
            <person name="Botchan M.R."/>
            <person name="Bouck J."/>
            <person name="Brokstein P."/>
            <person name="Brottier P."/>
            <person name="Burtis K.C."/>
            <person name="Busam D.A."/>
            <person name="Butler H."/>
            <person name="Cadieu E."/>
            <person name="Center A."/>
            <person name="Chandra I."/>
            <person name="Cherry J.M."/>
            <person name="Cawley S."/>
            <person name="Dahlke C."/>
            <person name="Davenport L.B."/>
            <person name="Davies P."/>
            <person name="de Pablos B."/>
            <person name="Delcher A."/>
            <person name="Deng Z."/>
            <person name="Mays A.D."/>
            <person name="Dew I."/>
            <person name="Dietz S.M."/>
            <person name="Dodson K."/>
            <person name="Doup L.E."/>
            <person name="Downes M."/>
            <person name="Dugan-Rocha S."/>
            <person name="Dunkov B.C."/>
            <person name="Dunn P."/>
            <person name="Durbin K.J."/>
            <person name="Evangelista C.C."/>
            <person name="Ferraz C."/>
            <person name="Ferriera S."/>
            <person name="Fleischmann W."/>
            <person name="Fosler C."/>
            <person name="Gabrielian A.E."/>
            <person name="Garg N.S."/>
            <person name="Gelbart W.M."/>
            <person name="Glasser K."/>
            <person name="Glodek A."/>
            <person name="Gong F."/>
            <person name="Gorrell J.H."/>
            <person name="Gu Z."/>
            <person name="Guan P."/>
            <person name="Harris M."/>
            <person name="Harris N.L."/>
            <person name="Harvey D.A."/>
            <person name="Heiman T.J."/>
            <person name="Hernandez J.R."/>
            <person name="Houck J."/>
            <person name="Hostin D."/>
            <person name="Houston K.A."/>
            <person name="Howland T.J."/>
            <person name="Wei M.-H."/>
            <person name="Ibegwam C."/>
            <person name="Jalali M."/>
            <person name="Kalush F."/>
            <person name="Karpen G.H."/>
            <person name="Ke Z."/>
            <person name="Kennison J.A."/>
            <person name="Ketchum K.A."/>
            <person name="Kimmel B.E."/>
            <person name="Kodira C.D."/>
            <person name="Kraft C.L."/>
            <person name="Kravitz S."/>
            <person name="Kulp D."/>
            <person name="Lai Z."/>
            <person name="Lasko P."/>
            <person name="Lei Y."/>
            <person name="Levitsky A.A."/>
            <person name="Li J.H."/>
            <person name="Li Z."/>
            <person name="Liang Y."/>
            <person name="Lin X."/>
            <person name="Liu X."/>
            <person name="Mattei B."/>
            <person name="McIntosh T.C."/>
            <person name="McLeod M.P."/>
            <person name="McPherson D."/>
            <person name="Merkulov G."/>
            <person name="Milshina N.V."/>
            <person name="Mobarry C."/>
            <person name="Morris J."/>
            <person name="Moshrefi A."/>
            <person name="Mount S.M."/>
            <person name="Moy M."/>
            <person name="Murphy B."/>
            <person name="Murphy L."/>
            <person name="Muzny D.M."/>
            <person name="Nelson D.L."/>
            <person name="Nelson D.R."/>
            <person name="Nelson K.A."/>
            <person name="Nixon K."/>
            <person name="Nusskern D.R."/>
            <person name="Pacleb J.M."/>
            <person name="Palazzolo M."/>
            <person name="Pittman G.S."/>
            <person name="Pan S."/>
            <person name="Pollard J."/>
            <person name="Puri V."/>
            <person name="Reese M.G."/>
            <person name="Reinert K."/>
            <person name="Remington K."/>
            <person name="Saunders R.D.C."/>
            <person name="Scheeler F."/>
            <person name="Shen H."/>
            <person name="Shue B.C."/>
            <person name="Siden-Kiamos I."/>
            <person name="Simpson M."/>
            <person name="Skupski M.P."/>
            <person name="Smith T.J."/>
            <person name="Spier E."/>
            <person name="Spradling A.C."/>
            <person name="Stapleton M."/>
            <person name="Strong R."/>
            <person name="Sun E."/>
            <person name="Svirskas R."/>
            <person name="Tector C."/>
            <person name="Turner R."/>
            <person name="Venter E."/>
            <person name="Wang A.H."/>
            <person name="Wang X."/>
            <person name="Wang Z.-Y."/>
            <person name="Wassarman D.A."/>
            <person name="Weinstock G.M."/>
            <person name="Weissenbach J."/>
            <person name="Williams S.M."/>
            <person name="Woodage T."/>
            <person name="Worley K.C."/>
            <person name="Wu D."/>
            <person name="Yang S."/>
            <person name="Yao Q.A."/>
            <person name="Ye J."/>
            <person name="Yeh R.-F."/>
            <person name="Zaveri J.S."/>
            <person name="Zhan M."/>
            <person name="Zhang G."/>
            <person name="Zhao Q."/>
            <person name="Zheng L."/>
            <person name="Zheng X.H."/>
            <person name="Zhong F.N."/>
            <person name="Zhong W."/>
            <person name="Zhou X."/>
            <person name="Zhu S.C."/>
            <person name="Zhu X."/>
            <person name="Smith H.O."/>
            <person name="Gibbs R.A."/>
            <person name="Myers E.W."/>
            <person name="Rubin G.M."/>
            <person name="Venter J.C."/>
        </authorList>
    </citation>
    <scope>NUCLEOTIDE SEQUENCE [LARGE SCALE GENOMIC DNA]</scope>
    <source>
        <strain>Berkeley</strain>
    </source>
</reference>
<reference key="2">
    <citation type="journal article" date="2002" name="Genome Biol.">
        <title>Annotation of the Drosophila melanogaster euchromatic genome: a systematic review.</title>
        <authorList>
            <person name="Misra S."/>
            <person name="Crosby M.A."/>
            <person name="Mungall C.J."/>
            <person name="Matthews B.B."/>
            <person name="Campbell K.S."/>
            <person name="Hradecky P."/>
            <person name="Huang Y."/>
            <person name="Kaminker J.S."/>
            <person name="Millburn G.H."/>
            <person name="Prochnik S.E."/>
            <person name="Smith C.D."/>
            <person name="Tupy J.L."/>
            <person name="Whitfield E.J."/>
            <person name="Bayraktaroglu L."/>
            <person name="Berman B.P."/>
            <person name="Bettencourt B.R."/>
            <person name="Celniker S.E."/>
            <person name="de Grey A.D.N.J."/>
            <person name="Drysdale R.A."/>
            <person name="Harris N.L."/>
            <person name="Richter J."/>
            <person name="Russo S."/>
            <person name="Schroeder A.J."/>
            <person name="Shu S.Q."/>
            <person name="Stapleton M."/>
            <person name="Yamada C."/>
            <person name="Ashburner M."/>
            <person name="Gelbart W.M."/>
            <person name="Rubin G.M."/>
            <person name="Lewis S.E."/>
        </authorList>
    </citation>
    <scope>GENOME REANNOTATION</scope>
    <source>
        <strain>Berkeley</strain>
    </source>
</reference>
<reference key="3">
    <citation type="submission" date="2008-09" db="EMBL/GenBank/DDBJ databases">
        <authorList>
            <person name="Stapleton M."/>
            <person name="Carlson J.W."/>
            <person name="Booth B."/>
            <person name="Chavez C."/>
            <person name="Frise E."/>
            <person name="George R.A."/>
            <person name="Pacleb J.M."/>
            <person name="Park S."/>
            <person name="Wan K.H."/>
            <person name="Yu C."/>
            <person name="Celniker S.E."/>
        </authorList>
    </citation>
    <scope>NUCLEOTIDE SEQUENCE [LARGE SCALE MRNA]</scope>
    <source>
        <strain>Berkeley</strain>
    </source>
</reference>
<sequence>MTKGTTSFGKRHNKTHTICRRCGNSSYHLQKSKCSQCGYPAAKTRSFNWSRKAKGRKAQGTGRMRYLKNLRRRFRNGLREGGAAKKKTN</sequence>
<gene>
    <name evidence="4" type="primary">RpL37-2</name>
    <name evidence="3" type="synonym">RpL37b</name>
    <name evidence="4" type="ORF">CG9873</name>
</gene>
<proteinExistence type="evidence at protein level"/>
<accession>Q9W1U6</accession>
<accession>B5RJ24</accession>
<accession>Q4V3Z3</accession>
<evidence type="ECO:0000250" key="1"/>
<evidence type="ECO:0000255" key="2"/>
<evidence type="ECO:0000305" key="3"/>
<evidence type="ECO:0000312" key="4">
    <source>
        <dbReference type="FlyBase" id="FBgn0034822"/>
    </source>
</evidence>
<comment type="function">
    <text evidence="1">Binds to the 23S rRNA.</text>
</comment>
<comment type="cofactor">
    <cofactor evidence="1">
        <name>Zn(2+)</name>
        <dbReference type="ChEBI" id="CHEBI:29105"/>
    </cofactor>
    <text evidence="1">Binds 1 zinc ion per subunit.</text>
</comment>
<comment type="similarity">
    <text evidence="3">Belongs to the eukaryotic ribosomal protein eL37 family.</text>
</comment>
<organism>
    <name type="scientific">Drosophila melanogaster</name>
    <name type="common">Fruit fly</name>
    <dbReference type="NCBI Taxonomy" id="7227"/>
    <lineage>
        <taxon>Eukaryota</taxon>
        <taxon>Metazoa</taxon>
        <taxon>Ecdysozoa</taxon>
        <taxon>Arthropoda</taxon>
        <taxon>Hexapoda</taxon>
        <taxon>Insecta</taxon>
        <taxon>Pterygota</taxon>
        <taxon>Neoptera</taxon>
        <taxon>Endopterygota</taxon>
        <taxon>Diptera</taxon>
        <taxon>Brachycera</taxon>
        <taxon>Muscomorpha</taxon>
        <taxon>Ephydroidea</taxon>
        <taxon>Drosophilidae</taxon>
        <taxon>Drosophila</taxon>
        <taxon>Sophophora</taxon>
    </lineage>
</organism>